<evidence type="ECO:0000250" key="1"/>
<evidence type="ECO:0000256" key="2">
    <source>
        <dbReference type="SAM" id="MobiDB-lite"/>
    </source>
</evidence>
<evidence type="ECO:0000305" key="3"/>
<feature type="chain" id="PRO_0000397855" description="AP-4 complex subunit epsilon">
    <location>
        <begin position="1"/>
        <end position="938"/>
    </location>
</feature>
<feature type="repeat" description="HEAT 1">
    <location>
        <begin position="118"/>
        <end position="153"/>
    </location>
</feature>
<feature type="repeat" description="HEAT 2">
    <location>
        <begin position="154"/>
        <end position="190"/>
    </location>
</feature>
<feature type="repeat" description="HEAT 3">
    <location>
        <begin position="192"/>
        <end position="227"/>
    </location>
</feature>
<feature type="repeat" description="HEAT 4">
    <location>
        <begin position="234"/>
        <end position="272"/>
    </location>
</feature>
<feature type="repeat" description="HEAT 5">
    <location>
        <begin position="321"/>
        <end position="358"/>
    </location>
</feature>
<feature type="repeat" description="HEAT 6">
    <location>
        <begin position="359"/>
        <end position="395"/>
    </location>
</feature>
<feature type="repeat" description="HEAT 7">
    <location>
        <begin position="397"/>
        <end position="431"/>
    </location>
</feature>
<feature type="repeat" description="HEAT 8">
    <location>
        <begin position="454"/>
        <end position="495"/>
    </location>
</feature>
<feature type="repeat" description="HEAT 9">
    <location>
        <begin position="517"/>
        <end position="556"/>
    </location>
</feature>
<feature type="repeat" description="HEAT 10">
    <location>
        <begin position="562"/>
        <end position="601"/>
    </location>
</feature>
<feature type="repeat" description="HEAT 11">
    <location>
        <begin position="874"/>
        <end position="911"/>
    </location>
</feature>
<feature type="region of interest" description="Disordered" evidence="2">
    <location>
        <begin position="690"/>
        <end position="712"/>
    </location>
</feature>
<feature type="region of interest" description="Disordered" evidence="2">
    <location>
        <begin position="725"/>
        <end position="867"/>
    </location>
</feature>
<feature type="region of interest" description="Disordered" evidence="2">
    <location>
        <begin position="880"/>
        <end position="912"/>
    </location>
</feature>
<feature type="region of interest" description="Disordered" evidence="2">
    <location>
        <begin position="919"/>
        <end position="938"/>
    </location>
</feature>
<feature type="compositionally biased region" description="Polar residues" evidence="2">
    <location>
        <begin position="694"/>
        <end position="706"/>
    </location>
</feature>
<feature type="compositionally biased region" description="Low complexity" evidence="2">
    <location>
        <begin position="728"/>
        <end position="744"/>
    </location>
</feature>
<feature type="compositionally biased region" description="Basic and acidic residues" evidence="2">
    <location>
        <begin position="764"/>
        <end position="779"/>
    </location>
</feature>
<feature type="compositionally biased region" description="Polar residues" evidence="2">
    <location>
        <begin position="808"/>
        <end position="821"/>
    </location>
</feature>
<feature type="compositionally biased region" description="Low complexity" evidence="2">
    <location>
        <begin position="853"/>
        <end position="863"/>
    </location>
</feature>
<feature type="compositionally biased region" description="Low complexity" evidence="2">
    <location>
        <begin position="880"/>
        <end position="891"/>
    </location>
</feature>
<feature type="compositionally biased region" description="Polar residues" evidence="2">
    <location>
        <begin position="892"/>
        <end position="906"/>
    </location>
</feature>
<protein>
    <recommendedName>
        <fullName>AP-4 complex subunit epsilon</fullName>
    </recommendedName>
    <alternativeName>
        <fullName>AP-4 adaptor complex subunit epsilon</fullName>
    </alternativeName>
    <alternativeName>
        <fullName>Adaptor-related protein complex 4 subunit epsilon</fullName>
    </alternativeName>
    <alternativeName>
        <fullName>Epsilon subunit of AP-4</fullName>
    </alternativeName>
    <alternativeName>
        <fullName>Epsilon-adaptin</fullName>
    </alternativeName>
</protein>
<comment type="function">
    <text evidence="1">Subunit of novel type of clathrin- or non-clathrin-associated protein coat involved in targeting proteins from the trans-Golgi network (TGN) to the endosomal-lysosomal system.</text>
</comment>
<comment type="subunit">
    <text evidence="1">Adaptor protein complex 4 (AP-4) is a heterotetramer composed of two large adaptins (epsilon-type subunit and beta-type subunit), a medium adaptin (mu-type subunit) and a small adaptin (sigma-type subunit).</text>
</comment>
<comment type="subcellular location">
    <subcellularLocation>
        <location evidence="1">Golgi apparatus</location>
        <location evidence="1">trans-Golgi network</location>
    </subcellularLocation>
    <subcellularLocation>
        <location evidence="1">Membrane</location>
        <location evidence="1">Coated pit</location>
    </subcellularLocation>
    <text evidence="1">Associated with the trans-Golgi network.</text>
</comment>
<comment type="similarity">
    <text evidence="3">Belongs to the adaptor complexes large subunit family.</text>
</comment>
<comment type="sequence caution" evidence="3">
    <conflict type="erroneous gene model prediction">
        <sequence resource="EMBL-CDS" id="AAG60138"/>
    </conflict>
</comment>
<accession>Q8L7A9</accession>
<accession>Q9C6W3</accession>
<proteinExistence type="evidence at protein level"/>
<dbReference type="EMBL" id="AC074360">
    <property type="protein sequence ID" value="AAG60138.1"/>
    <property type="status" value="ALT_SEQ"/>
    <property type="molecule type" value="Genomic_DNA"/>
</dbReference>
<dbReference type="EMBL" id="CP002684">
    <property type="protein sequence ID" value="AEE31386.1"/>
    <property type="molecule type" value="Genomic_DNA"/>
</dbReference>
<dbReference type="EMBL" id="AY136369">
    <property type="protein sequence ID" value="AAM97035.1"/>
    <property type="molecule type" value="mRNA"/>
</dbReference>
<dbReference type="EMBL" id="BT000268">
    <property type="protein sequence ID" value="AAN15587.1"/>
    <property type="molecule type" value="mRNA"/>
</dbReference>
<dbReference type="RefSeq" id="NP_174454.2">
    <property type="nucleotide sequence ID" value="NM_102908.3"/>
</dbReference>
<dbReference type="SMR" id="Q8L7A9"/>
<dbReference type="BioGRID" id="25294">
    <property type="interactions" value="1"/>
</dbReference>
<dbReference type="FunCoup" id="Q8L7A9">
    <property type="interactions" value="4111"/>
</dbReference>
<dbReference type="STRING" id="3702.Q8L7A9"/>
<dbReference type="iPTMnet" id="Q8L7A9"/>
<dbReference type="PaxDb" id="3702-AT1G31730.1"/>
<dbReference type="ProteomicsDB" id="244990"/>
<dbReference type="ABCD" id="Q8L7A9">
    <property type="antibodies" value="2 sequenced antibodies"/>
</dbReference>
<dbReference type="EnsemblPlants" id="AT1G31730.1">
    <property type="protein sequence ID" value="AT1G31730.1"/>
    <property type="gene ID" value="AT1G31730"/>
</dbReference>
<dbReference type="GeneID" id="840060"/>
<dbReference type="Gramene" id="AT1G31730.1">
    <property type="protein sequence ID" value="AT1G31730.1"/>
    <property type="gene ID" value="AT1G31730"/>
</dbReference>
<dbReference type="KEGG" id="ath:AT1G31730"/>
<dbReference type="Araport" id="AT1G31730"/>
<dbReference type="TAIR" id="AT1G31730">
    <property type="gene designation" value="AP4E"/>
</dbReference>
<dbReference type="eggNOG" id="KOG1062">
    <property type="taxonomic scope" value="Eukaryota"/>
</dbReference>
<dbReference type="HOGENOM" id="CLU_003824_3_2_1"/>
<dbReference type="InParanoid" id="Q8L7A9"/>
<dbReference type="OMA" id="ADNNMEI"/>
<dbReference type="PhylomeDB" id="Q8L7A9"/>
<dbReference type="PRO" id="PR:Q8L7A9"/>
<dbReference type="Proteomes" id="UP000006548">
    <property type="component" value="Chromosome 1"/>
</dbReference>
<dbReference type="ExpressionAtlas" id="Q8L7A9">
    <property type="expression patterns" value="baseline and differential"/>
</dbReference>
<dbReference type="GO" id="GO:0030124">
    <property type="term" value="C:AP-4 adaptor complex"/>
    <property type="evidence" value="ECO:0000353"/>
    <property type="project" value="TAIR"/>
</dbReference>
<dbReference type="GO" id="GO:0005905">
    <property type="term" value="C:clathrin-coated pit"/>
    <property type="evidence" value="ECO:0007669"/>
    <property type="project" value="UniProtKB-KW"/>
</dbReference>
<dbReference type="GO" id="GO:0005794">
    <property type="term" value="C:Golgi apparatus"/>
    <property type="evidence" value="ECO:0007669"/>
    <property type="project" value="UniProtKB-SubCell"/>
</dbReference>
<dbReference type="GO" id="GO:0009506">
    <property type="term" value="C:plasmodesma"/>
    <property type="evidence" value="ECO:0007005"/>
    <property type="project" value="TAIR"/>
</dbReference>
<dbReference type="GO" id="GO:0006886">
    <property type="term" value="P:intracellular protein transport"/>
    <property type="evidence" value="ECO:0007669"/>
    <property type="project" value="InterPro"/>
</dbReference>
<dbReference type="GO" id="GO:0016192">
    <property type="term" value="P:vesicle-mediated transport"/>
    <property type="evidence" value="ECO:0007669"/>
    <property type="project" value="InterPro"/>
</dbReference>
<dbReference type="FunFam" id="1.25.10.10:FF:000721">
    <property type="entry name" value="AP-4 complex subunit epsilon"/>
    <property type="match status" value="1"/>
</dbReference>
<dbReference type="Gene3D" id="1.25.10.10">
    <property type="entry name" value="Leucine-rich Repeat Variant"/>
    <property type="match status" value="1"/>
</dbReference>
<dbReference type="InterPro" id="IPR050840">
    <property type="entry name" value="Adaptor_Complx_Large_Subunit"/>
</dbReference>
<dbReference type="InterPro" id="IPR017109">
    <property type="entry name" value="AP4_complex_esu"/>
</dbReference>
<dbReference type="InterPro" id="IPR011989">
    <property type="entry name" value="ARM-like"/>
</dbReference>
<dbReference type="InterPro" id="IPR016024">
    <property type="entry name" value="ARM-type_fold"/>
</dbReference>
<dbReference type="InterPro" id="IPR002553">
    <property type="entry name" value="Clathrin/coatomer_adapt-like_N"/>
</dbReference>
<dbReference type="PANTHER" id="PTHR22780">
    <property type="entry name" value="ADAPTIN, ALPHA/GAMMA/EPSILON"/>
    <property type="match status" value="1"/>
</dbReference>
<dbReference type="Pfam" id="PF01602">
    <property type="entry name" value="Adaptin_N"/>
    <property type="match status" value="1"/>
</dbReference>
<dbReference type="PIRSF" id="PIRSF037097">
    <property type="entry name" value="AP4_complex_epsilon"/>
    <property type="match status" value="1"/>
</dbReference>
<dbReference type="SUPFAM" id="SSF48371">
    <property type="entry name" value="ARM repeat"/>
    <property type="match status" value="1"/>
</dbReference>
<gene>
    <name type="ordered locus">At1g31730</name>
    <name type="ORF">F27M3.7</name>
</gene>
<reference key="1">
    <citation type="journal article" date="2000" name="Nature">
        <title>Sequence and analysis of chromosome 1 of the plant Arabidopsis thaliana.</title>
        <authorList>
            <person name="Theologis A."/>
            <person name="Ecker J.R."/>
            <person name="Palm C.J."/>
            <person name="Federspiel N.A."/>
            <person name="Kaul S."/>
            <person name="White O."/>
            <person name="Alonso J."/>
            <person name="Altafi H."/>
            <person name="Araujo R."/>
            <person name="Bowman C.L."/>
            <person name="Brooks S.Y."/>
            <person name="Buehler E."/>
            <person name="Chan A."/>
            <person name="Chao Q."/>
            <person name="Chen H."/>
            <person name="Cheuk R.F."/>
            <person name="Chin C.W."/>
            <person name="Chung M.K."/>
            <person name="Conn L."/>
            <person name="Conway A.B."/>
            <person name="Conway A.R."/>
            <person name="Creasy T.H."/>
            <person name="Dewar K."/>
            <person name="Dunn P."/>
            <person name="Etgu P."/>
            <person name="Feldblyum T.V."/>
            <person name="Feng J.-D."/>
            <person name="Fong B."/>
            <person name="Fujii C.Y."/>
            <person name="Gill J.E."/>
            <person name="Goldsmith A.D."/>
            <person name="Haas B."/>
            <person name="Hansen N.F."/>
            <person name="Hughes B."/>
            <person name="Huizar L."/>
            <person name="Hunter J.L."/>
            <person name="Jenkins J."/>
            <person name="Johnson-Hopson C."/>
            <person name="Khan S."/>
            <person name="Khaykin E."/>
            <person name="Kim C.J."/>
            <person name="Koo H.L."/>
            <person name="Kremenetskaia I."/>
            <person name="Kurtz D.B."/>
            <person name="Kwan A."/>
            <person name="Lam B."/>
            <person name="Langin-Hooper S."/>
            <person name="Lee A."/>
            <person name="Lee J.M."/>
            <person name="Lenz C.A."/>
            <person name="Li J.H."/>
            <person name="Li Y.-P."/>
            <person name="Lin X."/>
            <person name="Liu S.X."/>
            <person name="Liu Z.A."/>
            <person name="Luros J.S."/>
            <person name="Maiti R."/>
            <person name="Marziali A."/>
            <person name="Militscher J."/>
            <person name="Miranda M."/>
            <person name="Nguyen M."/>
            <person name="Nierman W.C."/>
            <person name="Osborne B.I."/>
            <person name="Pai G."/>
            <person name="Peterson J."/>
            <person name="Pham P.K."/>
            <person name="Rizzo M."/>
            <person name="Rooney T."/>
            <person name="Rowley D."/>
            <person name="Sakano H."/>
            <person name="Salzberg S.L."/>
            <person name="Schwartz J.R."/>
            <person name="Shinn P."/>
            <person name="Southwick A.M."/>
            <person name="Sun H."/>
            <person name="Tallon L.J."/>
            <person name="Tambunga G."/>
            <person name="Toriumi M.J."/>
            <person name="Town C.D."/>
            <person name="Utterback T."/>
            <person name="Van Aken S."/>
            <person name="Vaysberg M."/>
            <person name="Vysotskaia V.S."/>
            <person name="Walker M."/>
            <person name="Wu D."/>
            <person name="Yu G."/>
            <person name="Fraser C.M."/>
            <person name="Venter J.C."/>
            <person name="Davis R.W."/>
        </authorList>
    </citation>
    <scope>NUCLEOTIDE SEQUENCE [LARGE SCALE GENOMIC DNA]</scope>
    <source>
        <strain>cv. Columbia</strain>
    </source>
</reference>
<reference key="2">
    <citation type="journal article" date="2017" name="Plant J.">
        <title>Araport11: a complete reannotation of the Arabidopsis thaliana reference genome.</title>
        <authorList>
            <person name="Cheng C.Y."/>
            <person name="Krishnakumar V."/>
            <person name="Chan A.P."/>
            <person name="Thibaud-Nissen F."/>
            <person name="Schobel S."/>
            <person name="Town C.D."/>
        </authorList>
    </citation>
    <scope>GENOME REANNOTATION</scope>
    <source>
        <strain>cv. Columbia</strain>
    </source>
</reference>
<reference key="3">
    <citation type="journal article" date="2003" name="Science">
        <title>Empirical analysis of transcriptional activity in the Arabidopsis genome.</title>
        <authorList>
            <person name="Yamada K."/>
            <person name="Lim J."/>
            <person name="Dale J.M."/>
            <person name="Chen H."/>
            <person name="Shinn P."/>
            <person name="Palm C.J."/>
            <person name="Southwick A.M."/>
            <person name="Wu H.C."/>
            <person name="Kim C.J."/>
            <person name="Nguyen M."/>
            <person name="Pham P.K."/>
            <person name="Cheuk R.F."/>
            <person name="Karlin-Newmann G."/>
            <person name="Liu S.X."/>
            <person name="Lam B."/>
            <person name="Sakano H."/>
            <person name="Wu T."/>
            <person name="Yu G."/>
            <person name="Miranda M."/>
            <person name="Quach H.L."/>
            <person name="Tripp M."/>
            <person name="Chang C.H."/>
            <person name="Lee J.M."/>
            <person name="Toriumi M.J."/>
            <person name="Chan M.M."/>
            <person name="Tang C.C."/>
            <person name="Onodera C.S."/>
            <person name="Deng J.M."/>
            <person name="Akiyama K."/>
            <person name="Ansari Y."/>
            <person name="Arakawa T."/>
            <person name="Banh J."/>
            <person name="Banno F."/>
            <person name="Bowser L."/>
            <person name="Brooks S.Y."/>
            <person name="Carninci P."/>
            <person name="Chao Q."/>
            <person name="Choy N."/>
            <person name="Enju A."/>
            <person name="Goldsmith A.D."/>
            <person name="Gurjal M."/>
            <person name="Hansen N.F."/>
            <person name="Hayashizaki Y."/>
            <person name="Johnson-Hopson C."/>
            <person name="Hsuan V.W."/>
            <person name="Iida K."/>
            <person name="Karnes M."/>
            <person name="Khan S."/>
            <person name="Koesema E."/>
            <person name="Ishida J."/>
            <person name="Jiang P.X."/>
            <person name="Jones T."/>
            <person name="Kawai J."/>
            <person name="Kamiya A."/>
            <person name="Meyers C."/>
            <person name="Nakajima M."/>
            <person name="Narusaka M."/>
            <person name="Seki M."/>
            <person name="Sakurai T."/>
            <person name="Satou M."/>
            <person name="Tamse R."/>
            <person name="Vaysberg M."/>
            <person name="Wallender E.K."/>
            <person name="Wong C."/>
            <person name="Yamamura Y."/>
            <person name="Yuan S."/>
            <person name="Shinozaki K."/>
            <person name="Davis R.W."/>
            <person name="Theologis A."/>
            <person name="Ecker J.R."/>
        </authorList>
    </citation>
    <scope>NUCLEOTIDE SEQUENCE [LARGE SCALE MRNA]</scope>
    <source>
        <strain>cv. Columbia</strain>
    </source>
</reference>
<reference key="4">
    <citation type="journal article" date="2001" name="Mol. Biol. Cell">
        <title>Adaptins: the final recount.</title>
        <authorList>
            <person name="Boehm M."/>
            <person name="Bonifacino J.S."/>
        </authorList>
    </citation>
    <scope>GENE FAMILY</scope>
    <scope>REVIEW</scope>
</reference>
<reference key="5">
    <citation type="journal article" date="2009" name="Plant Physiol.">
        <title>Large-scale Arabidopsis phosphoproteome profiling reveals novel chloroplast kinase substrates and phosphorylation networks.</title>
        <authorList>
            <person name="Reiland S."/>
            <person name="Messerli G."/>
            <person name="Baerenfaller K."/>
            <person name="Gerrits B."/>
            <person name="Endler A."/>
            <person name="Grossmann J."/>
            <person name="Gruissem W."/>
            <person name="Baginsky S."/>
        </authorList>
    </citation>
    <scope>IDENTIFICATION BY MASS SPECTROMETRY [LARGE SCALE ANALYSIS]</scope>
</reference>
<name>AP4E_ARATH</name>
<organism>
    <name type="scientific">Arabidopsis thaliana</name>
    <name type="common">Mouse-ear cress</name>
    <dbReference type="NCBI Taxonomy" id="3702"/>
    <lineage>
        <taxon>Eukaryota</taxon>
        <taxon>Viridiplantae</taxon>
        <taxon>Streptophyta</taxon>
        <taxon>Embryophyta</taxon>
        <taxon>Tracheophyta</taxon>
        <taxon>Spermatophyta</taxon>
        <taxon>Magnoliopsida</taxon>
        <taxon>eudicotyledons</taxon>
        <taxon>Gunneridae</taxon>
        <taxon>Pentapetalae</taxon>
        <taxon>rosids</taxon>
        <taxon>malvids</taxon>
        <taxon>Brassicales</taxon>
        <taxon>Brassicaceae</taxon>
        <taxon>Camelineae</taxon>
        <taxon>Arabidopsis</taxon>
    </lineage>
</organism>
<sequence>MEQLKTIGRELAMGSQGGFGQSKEFLDLVKSIGEARSKAEEDRIVLSEVDILKRRLLEPDIPKRKMKEYIIRLVYIEMLGHDASFGYIYAVKMTHDDNLLLKRTGYLAVTLFLNEDHDLIILIVNTIQKDLRSDNYLVVCAALNAICRLINEETIPAVLPQVVELLNHQKEAVRKKAIMALHRFHRKSPSSVSHLVSNFRKRLCDNDPGVMGATLCPLFDLISEDVNSYKDLVSSFVSILKQVTERRLPKSYDYHQMPAPFIQIKLLKIMALLGSGDKNASDIMSMVLGDLFRKCDSSTNIGNAILYECIRCISCILPNPKLLEAAADAISKFLKSDSHNLKYMGIDGLGRLIKISPDIAEQHQLAVIDCLEDPDDTLKRKTFELLYKMTKSSNVEVIVDRMIDYMISINDNHYKTEIASRCVELAEQFAPSNQWFIQIMNKVFEHAGDLVNIKVAHNLMRLIAEGFGEDDDDADSKLRLSAVESYLQLISEPKLPSLFLQVISWVLGEYGTADGKYSASYISGKLCDVADAYSSDETVKGYAVSALMKIYAFEIASGRKVDVLPECQSLIEELLASHSTDLQQRAYELQALLALDARAVETILPLDASCEDIEVDKDLSFLNGYIQQAIESGAQPYISERERSGMFETTDYHPQDHHEVPTHALRFEAYELPKPSVPPQASNELVPVPEPSYYSESHQPISTSLVSERESSEIKLRLDGVKQKWGRPSYQSTTAASSTTPQAANGISTHSDAGVGSSSSKPRSSYEPKKPEIDPEKQRLAASLFGGSSSRTDKRSSSGGHKPAKGTANKTATVPKENQTPVQPPPDLLDFGEPTATTATAMDPFKELEGLMDSSSQDGGSSDVMGLYSDAAPVTTTTSVDSLLSELSDSSKGNSRTYQPQTSKGPNTKEALEKDALVRQMGVNPTSQNPTLFKDLLG</sequence>
<keyword id="KW-0168">Coated pit</keyword>
<keyword id="KW-0333">Golgi apparatus</keyword>
<keyword id="KW-0472">Membrane</keyword>
<keyword id="KW-0653">Protein transport</keyword>
<keyword id="KW-1185">Reference proteome</keyword>
<keyword id="KW-0677">Repeat</keyword>
<keyword id="KW-0813">Transport</keyword>